<gene>
    <name evidence="1" type="primary">surE</name>
    <name type="ordered locus">Ddes_0130</name>
</gene>
<name>SURE_DESDA</name>
<sequence length="257" mass="27921">MNVLLTNDDGIRAKGLRALYAALREAGHTVYVVAPMSQQSGVGHSLTVFEPVRATVIEEPDFTGTGVYGTPTDCVKLALGRLLPHKPDLVMSGINAGANVGPDILYSGTVGAATEAAHEELPSMAVSFDSFSHNTAPDMDLMPQARHAVNLAERMNWSAVGRRRVININYPACPLDEAQDLRVCPQTSAVWKNVYIEREDPRGAPYWWLEGEIPPASIEPGSDKDLLNRGHITLTPLCFDFTDHEGLTALKCMKLQG</sequence>
<evidence type="ECO:0000255" key="1">
    <source>
        <dbReference type="HAMAP-Rule" id="MF_00060"/>
    </source>
</evidence>
<comment type="function">
    <text evidence="1">Nucleotidase that shows phosphatase activity on nucleoside 5'-monophosphates.</text>
</comment>
<comment type="catalytic activity">
    <reaction evidence="1">
        <text>a ribonucleoside 5'-phosphate + H2O = a ribonucleoside + phosphate</text>
        <dbReference type="Rhea" id="RHEA:12484"/>
        <dbReference type="ChEBI" id="CHEBI:15377"/>
        <dbReference type="ChEBI" id="CHEBI:18254"/>
        <dbReference type="ChEBI" id="CHEBI:43474"/>
        <dbReference type="ChEBI" id="CHEBI:58043"/>
        <dbReference type="EC" id="3.1.3.5"/>
    </reaction>
</comment>
<comment type="cofactor">
    <cofactor evidence="1">
        <name>a divalent metal cation</name>
        <dbReference type="ChEBI" id="CHEBI:60240"/>
    </cofactor>
    <text evidence="1">Binds 1 divalent metal cation per subunit.</text>
</comment>
<comment type="subcellular location">
    <subcellularLocation>
        <location evidence="1">Cytoplasm</location>
    </subcellularLocation>
</comment>
<comment type="similarity">
    <text evidence="1">Belongs to the SurE nucleotidase family.</text>
</comment>
<accession>B8J2G2</accession>
<feature type="chain" id="PRO_1000196594" description="5'-nucleotidase SurE">
    <location>
        <begin position="1"/>
        <end position="257"/>
    </location>
</feature>
<feature type="binding site" evidence="1">
    <location>
        <position position="8"/>
    </location>
    <ligand>
        <name>a divalent metal cation</name>
        <dbReference type="ChEBI" id="CHEBI:60240"/>
    </ligand>
</feature>
<feature type="binding site" evidence="1">
    <location>
        <position position="9"/>
    </location>
    <ligand>
        <name>a divalent metal cation</name>
        <dbReference type="ChEBI" id="CHEBI:60240"/>
    </ligand>
</feature>
<feature type="binding site" evidence="1">
    <location>
        <position position="40"/>
    </location>
    <ligand>
        <name>a divalent metal cation</name>
        <dbReference type="ChEBI" id="CHEBI:60240"/>
    </ligand>
</feature>
<feature type="binding site" evidence="1">
    <location>
        <position position="95"/>
    </location>
    <ligand>
        <name>a divalent metal cation</name>
        <dbReference type="ChEBI" id="CHEBI:60240"/>
    </ligand>
</feature>
<dbReference type="EC" id="3.1.3.5" evidence="1"/>
<dbReference type="EMBL" id="CP001358">
    <property type="protein sequence ID" value="ACL48050.1"/>
    <property type="molecule type" value="Genomic_DNA"/>
</dbReference>
<dbReference type="SMR" id="B8J2G2"/>
<dbReference type="STRING" id="525146.Ddes_0130"/>
<dbReference type="KEGG" id="dds:Ddes_0130"/>
<dbReference type="eggNOG" id="COG0496">
    <property type="taxonomic scope" value="Bacteria"/>
</dbReference>
<dbReference type="HOGENOM" id="CLU_045192_1_3_7"/>
<dbReference type="GO" id="GO:0005737">
    <property type="term" value="C:cytoplasm"/>
    <property type="evidence" value="ECO:0007669"/>
    <property type="project" value="UniProtKB-SubCell"/>
</dbReference>
<dbReference type="GO" id="GO:0008253">
    <property type="term" value="F:5'-nucleotidase activity"/>
    <property type="evidence" value="ECO:0007669"/>
    <property type="project" value="UniProtKB-UniRule"/>
</dbReference>
<dbReference type="GO" id="GO:0046872">
    <property type="term" value="F:metal ion binding"/>
    <property type="evidence" value="ECO:0007669"/>
    <property type="project" value="UniProtKB-UniRule"/>
</dbReference>
<dbReference type="GO" id="GO:0000166">
    <property type="term" value="F:nucleotide binding"/>
    <property type="evidence" value="ECO:0007669"/>
    <property type="project" value="UniProtKB-KW"/>
</dbReference>
<dbReference type="Gene3D" id="3.40.1210.10">
    <property type="entry name" value="Survival protein SurE-like phosphatase/nucleotidase"/>
    <property type="match status" value="1"/>
</dbReference>
<dbReference type="HAMAP" id="MF_00060">
    <property type="entry name" value="SurE"/>
    <property type="match status" value="1"/>
</dbReference>
<dbReference type="InterPro" id="IPR030048">
    <property type="entry name" value="SurE"/>
</dbReference>
<dbReference type="InterPro" id="IPR002828">
    <property type="entry name" value="SurE-like_Pase/nucleotidase"/>
</dbReference>
<dbReference type="InterPro" id="IPR036523">
    <property type="entry name" value="SurE-like_sf"/>
</dbReference>
<dbReference type="NCBIfam" id="NF001490">
    <property type="entry name" value="PRK00346.1-4"/>
    <property type="match status" value="1"/>
</dbReference>
<dbReference type="NCBIfam" id="TIGR00087">
    <property type="entry name" value="surE"/>
    <property type="match status" value="1"/>
</dbReference>
<dbReference type="PANTHER" id="PTHR30457">
    <property type="entry name" value="5'-NUCLEOTIDASE SURE"/>
    <property type="match status" value="1"/>
</dbReference>
<dbReference type="PANTHER" id="PTHR30457:SF0">
    <property type="entry name" value="PHOSPHATASE, PUTATIVE (AFU_ORTHOLOGUE AFUA_4G01070)-RELATED"/>
    <property type="match status" value="1"/>
</dbReference>
<dbReference type="Pfam" id="PF01975">
    <property type="entry name" value="SurE"/>
    <property type="match status" value="1"/>
</dbReference>
<dbReference type="SUPFAM" id="SSF64167">
    <property type="entry name" value="SurE-like"/>
    <property type="match status" value="1"/>
</dbReference>
<protein>
    <recommendedName>
        <fullName evidence="1">5'-nucleotidase SurE</fullName>
        <ecNumber evidence="1">3.1.3.5</ecNumber>
    </recommendedName>
    <alternativeName>
        <fullName evidence="1">Nucleoside 5'-monophosphate phosphohydrolase</fullName>
    </alternativeName>
</protein>
<keyword id="KW-0963">Cytoplasm</keyword>
<keyword id="KW-0378">Hydrolase</keyword>
<keyword id="KW-0479">Metal-binding</keyword>
<keyword id="KW-0547">Nucleotide-binding</keyword>
<organism>
    <name type="scientific">Desulfovibrio desulfuricans (strain ATCC 27774 / DSM 6949 / MB)</name>
    <dbReference type="NCBI Taxonomy" id="525146"/>
    <lineage>
        <taxon>Bacteria</taxon>
        <taxon>Pseudomonadati</taxon>
        <taxon>Thermodesulfobacteriota</taxon>
        <taxon>Desulfovibrionia</taxon>
        <taxon>Desulfovibrionales</taxon>
        <taxon>Desulfovibrionaceae</taxon>
        <taxon>Desulfovibrio</taxon>
    </lineage>
</organism>
<reference key="1">
    <citation type="submission" date="2009-01" db="EMBL/GenBank/DDBJ databases">
        <title>Complete sequence of Desulfovibrio desulfuricans subsp. desulfuricans str. ATCC 27774.</title>
        <authorList>
            <consortium name="US DOE Joint Genome Institute"/>
            <person name="Lucas S."/>
            <person name="Copeland A."/>
            <person name="Lapidus A."/>
            <person name="Glavina del Rio T."/>
            <person name="Tice H."/>
            <person name="Bruce D."/>
            <person name="Goodwin L."/>
            <person name="Pitluck S."/>
            <person name="Sims D."/>
            <person name="Lu M."/>
            <person name="Kiss H."/>
            <person name="Meineke L."/>
            <person name="Brettin T."/>
            <person name="Detter J.C."/>
            <person name="Han C."/>
            <person name="Larimer F."/>
            <person name="Land M."/>
            <person name="Hauser L."/>
            <person name="Kyrpides N."/>
            <person name="Ovchinnikova G."/>
            <person name="Hazen T.C."/>
        </authorList>
    </citation>
    <scope>NUCLEOTIDE SEQUENCE [LARGE SCALE GENOMIC DNA]</scope>
    <source>
        <strain>ATCC 27774 / DSM 6949 / MB</strain>
    </source>
</reference>
<proteinExistence type="inferred from homology"/>